<feature type="chain" id="PRO_0000157899" description="Uncharacterized protein slr2042">
    <location>
        <begin position="1"/>
        <end position="275"/>
    </location>
</feature>
<accession>P73079</accession>
<name>Y2042_SYNY3</name>
<evidence type="ECO:0000305" key="1"/>
<comment type="similarity">
    <text evidence="1">Belongs to the MtfA family.</text>
</comment>
<dbReference type="EMBL" id="BA000022">
    <property type="protein sequence ID" value="BAA17104.1"/>
    <property type="molecule type" value="Genomic_DNA"/>
</dbReference>
<dbReference type="PIR" id="S75190">
    <property type="entry name" value="S75190"/>
</dbReference>
<dbReference type="SMR" id="P73079"/>
<dbReference type="STRING" id="1148.gene:10497965"/>
<dbReference type="PaxDb" id="1148-1652180"/>
<dbReference type="EnsemblBacteria" id="BAA17104">
    <property type="protein sequence ID" value="BAA17104"/>
    <property type="gene ID" value="BAA17104"/>
</dbReference>
<dbReference type="KEGG" id="syn:slr2042"/>
<dbReference type="eggNOG" id="COG3228">
    <property type="taxonomic scope" value="Bacteria"/>
</dbReference>
<dbReference type="InParanoid" id="P73079"/>
<dbReference type="PhylomeDB" id="P73079"/>
<dbReference type="Proteomes" id="UP000001425">
    <property type="component" value="Chromosome"/>
</dbReference>
<dbReference type="GO" id="GO:0005829">
    <property type="term" value="C:cytosol"/>
    <property type="evidence" value="ECO:0000318"/>
    <property type="project" value="GO_Central"/>
</dbReference>
<dbReference type="GO" id="GO:0004177">
    <property type="term" value="F:aminopeptidase activity"/>
    <property type="evidence" value="ECO:0000318"/>
    <property type="project" value="GO_Central"/>
</dbReference>
<dbReference type="GO" id="GO:0008237">
    <property type="term" value="F:metallopeptidase activity"/>
    <property type="evidence" value="ECO:0007669"/>
    <property type="project" value="InterPro"/>
</dbReference>
<dbReference type="CDD" id="cd20169">
    <property type="entry name" value="Peptidase_M90_mtfA"/>
    <property type="match status" value="1"/>
</dbReference>
<dbReference type="FunFam" id="1.10.472.150:FF:000001">
    <property type="entry name" value="Protein MtfA"/>
    <property type="match status" value="1"/>
</dbReference>
<dbReference type="FunFam" id="3.40.390.10:FF:000012">
    <property type="entry name" value="Protein MtfA"/>
    <property type="match status" value="1"/>
</dbReference>
<dbReference type="Gene3D" id="3.40.390.10">
    <property type="entry name" value="Collagenase (Catalytic Domain)"/>
    <property type="match status" value="1"/>
</dbReference>
<dbReference type="Gene3D" id="1.10.472.150">
    <property type="entry name" value="Glucose-regulated metallo-peptidase M90, N-terminal domain"/>
    <property type="match status" value="1"/>
</dbReference>
<dbReference type="InterPro" id="IPR024079">
    <property type="entry name" value="MetalloPept_cat_dom_sf"/>
</dbReference>
<dbReference type="InterPro" id="IPR010384">
    <property type="entry name" value="MtfA_fam"/>
</dbReference>
<dbReference type="InterPro" id="IPR042252">
    <property type="entry name" value="MtfA_N"/>
</dbReference>
<dbReference type="PANTHER" id="PTHR30164">
    <property type="entry name" value="MTFA PEPTIDASE"/>
    <property type="match status" value="1"/>
</dbReference>
<dbReference type="PANTHER" id="PTHR30164:SF2">
    <property type="entry name" value="PROTEIN MTFA"/>
    <property type="match status" value="1"/>
</dbReference>
<dbReference type="Pfam" id="PF06167">
    <property type="entry name" value="Peptidase_M90"/>
    <property type="match status" value="1"/>
</dbReference>
<dbReference type="SUPFAM" id="SSF55486">
    <property type="entry name" value="Metalloproteases ('zincins'), catalytic domain"/>
    <property type="match status" value="1"/>
</dbReference>
<proteinExistence type="inferred from homology"/>
<organism>
    <name type="scientific">Synechocystis sp. (strain ATCC 27184 / PCC 6803 / Kazusa)</name>
    <dbReference type="NCBI Taxonomy" id="1111708"/>
    <lineage>
        <taxon>Bacteria</taxon>
        <taxon>Bacillati</taxon>
        <taxon>Cyanobacteriota</taxon>
        <taxon>Cyanophyceae</taxon>
        <taxon>Synechococcales</taxon>
        <taxon>Merismopediaceae</taxon>
        <taxon>Synechocystis</taxon>
    </lineage>
</organism>
<protein>
    <recommendedName>
        <fullName>Uncharacterized protein slr2042</fullName>
    </recommendedName>
</protein>
<sequence>MLPTAIVLTILLGIIAYIWGYPHWLDWREKQLFQRPLPPHWQAILGDRLPFYAQLSPQQRQKLEAKIQLFLQQKQFIGCNDFVLTDEVRLVIAAQACYLALELGSNPYPRLDTILVYPDAFQVRQITSPDGYVVEEEDTVRAGESWDRAGQLILAWGTIAWDLERWQDGHNVIFHEFAHQLDMGDGAMNGVPKLGRRNDYQRWQSIFASEYQQLLSQLENNLPTVIDPYGATNPCEFFAVVTETFFEKGQELQHNHGQLYQVLRKYYCLEPLINC</sequence>
<reference key="1">
    <citation type="journal article" date="1996" name="DNA Res.">
        <title>Sequence analysis of the genome of the unicellular cyanobacterium Synechocystis sp. strain PCC6803. II. Sequence determination of the entire genome and assignment of potential protein-coding regions.</title>
        <authorList>
            <person name="Kaneko T."/>
            <person name="Sato S."/>
            <person name="Kotani H."/>
            <person name="Tanaka A."/>
            <person name="Asamizu E."/>
            <person name="Nakamura Y."/>
            <person name="Miyajima N."/>
            <person name="Hirosawa M."/>
            <person name="Sugiura M."/>
            <person name="Sasamoto S."/>
            <person name="Kimura T."/>
            <person name="Hosouchi T."/>
            <person name="Matsuno A."/>
            <person name="Muraki A."/>
            <person name="Nakazaki N."/>
            <person name="Naruo K."/>
            <person name="Okumura S."/>
            <person name="Shimpo S."/>
            <person name="Takeuchi C."/>
            <person name="Wada T."/>
            <person name="Watanabe A."/>
            <person name="Yamada M."/>
            <person name="Yasuda M."/>
            <person name="Tabata S."/>
        </authorList>
    </citation>
    <scope>NUCLEOTIDE SEQUENCE [LARGE SCALE GENOMIC DNA]</scope>
    <source>
        <strain>ATCC 27184 / PCC 6803 / Kazusa</strain>
    </source>
</reference>
<keyword id="KW-1185">Reference proteome</keyword>
<gene>
    <name type="ordered locus">slr2042</name>
</gene>